<sequence>MNYELLTTENAPVKMWTKGVPVEADARQQLINTAKMPFIFKHIAVMPDVHLGKGSTIGSVIPTKGAIIPAAVGVDIGCGMNALRTALTAADLPENLAELRQAIETAVPHGRTTGRCKRDKGAWENPPVNVDAKWAELEAGYQWLTQKYPRFLNTNNYKHLGTLGTGNHFIEICLDESDQVWIMLHSGSRGIGNAIGTYFIDLAQKEMQETLETLPSRDLAYFMEGTEYFDDYLKAVAWAQLFASLNRDAMMENVVTALQSVMQKTVKQPQTLAMEEINCHHNYVQKELHFGEEIYVTRKGAVSARAGQYGIIPGSMGAKSFIVRGLGNEESFCSCSHGAGRVMSRTKAKKLFSVEDQIRATAHVECRKDAEVIDEIPMAYKDIDAVMAAQSDLVEVIYTLRQVVCVKG</sequence>
<organism>
    <name type="scientific">Escherichia coli (strain ATCC 25922 / DSM 1103 / LMG 8223 / NCIMB 12210 / NCTC 12241 / WDCM 00013 / Seattle 1946)</name>
    <dbReference type="NCBI Taxonomy" id="1322345"/>
    <lineage>
        <taxon>Bacteria</taxon>
        <taxon>Pseudomonadati</taxon>
        <taxon>Pseudomonadota</taxon>
        <taxon>Gammaproteobacteria</taxon>
        <taxon>Enterobacterales</taxon>
        <taxon>Enterobacteriaceae</taxon>
        <taxon>Escherichia</taxon>
    </lineage>
</organism>
<accession>P0DX92</accession>
<evidence type="ECO:0000250" key="1">
    <source>
        <dbReference type="UniProtKB" id="O59245"/>
    </source>
</evidence>
<evidence type="ECO:0000250" key="2">
    <source>
        <dbReference type="UniProtKB" id="P46850"/>
    </source>
</evidence>
<evidence type="ECO:0000269" key="3">
    <source>
    </source>
</evidence>
<evidence type="ECO:0000303" key="4">
    <source>
    </source>
</evidence>
<evidence type="ECO:0000305" key="5"/>
<evidence type="ECO:0000305" key="6">
    <source>
    </source>
</evidence>
<evidence type="ECO:0000312" key="7">
    <source>
        <dbReference type="EMBL" id="AIL15363.1"/>
    </source>
</evidence>
<protein>
    <recommendedName>
        <fullName evidence="4">RNA-splicing ligase RtcB1</fullName>
        <ecNumber evidence="3">6.5.1.8</ecNumber>
    </recommendedName>
    <alternativeName>
        <fullName evidence="5">3'-phosphate/5'-hydroxy nucleic acid ligase</fullName>
    </alternativeName>
</protein>
<feature type="chain" id="PRO_0000459656" description="RNA-splicing ligase RtcB1">
    <location>
        <begin position="1"/>
        <end position="408"/>
    </location>
</feature>
<feature type="active site" description="GMP-histidine intermediate" evidence="2">
    <location>
        <position position="337"/>
    </location>
</feature>
<feature type="binding site" evidence="1">
    <location>
        <position position="75"/>
    </location>
    <ligand>
        <name>Mn(2+)</name>
        <dbReference type="ChEBI" id="CHEBI:29035"/>
        <label>1</label>
    </ligand>
</feature>
<feature type="binding site" evidence="1">
    <location>
        <position position="78"/>
    </location>
    <ligand>
        <name>Mn(2+)</name>
        <dbReference type="ChEBI" id="CHEBI:29035"/>
        <label>1</label>
    </ligand>
</feature>
<feature type="binding site" evidence="1">
    <location>
        <position position="78"/>
    </location>
    <ligand>
        <name>Mn(2+)</name>
        <dbReference type="ChEBI" id="CHEBI:29035"/>
        <label>2</label>
    </ligand>
</feature>
<feature type="binding site" evidence="1">
    <location>
        <begin position="167"/>
        <end position="171"/>
    </location>
    <ligand>
        <name>GMP</name>
        <dbReference type="ChEBI" id="CHEBI:58115"/>
    </ligand>
</feature>
<feature type="binding site" evidence="1">
    <location>
        <position position="168"/>
    </location>
    <ligand>
        <name>Mn(2+)</name>
        <dbReference type="ChEBI" id="CHEBI:29035"/>
        <label>1</label>
    </ligand>
</feature>
<feature type="binding site" evidence="1">
    <location>
        <position position="185"/>
    </location>
    <ligand>
        <name>Mn(2+)</name>
        <dbReference type="ChEBI" id="CHEBI:29035"/>
        <label>2</label>
    </ligand>
</feature>
<feature type="binding site" evidence="1">
    <location>
        <begin position="281"/>
        <end position="282"/>
    </location>
    <ligand>
        <name>GMP</name>
        <dbReference type="ChEBI" id="CHEBI:58115"/>
    </ligand>
</feature>
<feature type="binding site" evidence="1">
    <location>
        <position position="281"/>
    </location>
    <ligand>
        <name>Mn(2+)</name>
        <dbReference type="ChEBI" id="CHEBI:29035"/>
        <label>2</label>
    </ligand>
</feature>
<feature type="binding site" evidence="1">
    <location>
        <begin position="313"/>
        <end position="316"/>
    </location>
    <ligand>
        <name>GMP</name>
        <dbReference type="ChEBI" id="CHEBI:58115"/>
    </ligand>
</feature>
<feature type="binding site" evidence="1">
    <location>
        <position position="320"/>
    </location>
    <ligand>
        <name>GMP</name>
        <dbReference type="ChEBI" id="CHEBI:58115"/>
    </ligand>
</feature>
<feature type="binding site" evidence="1">
    <location>
        <begin position="337"/>
        <end position="340"/>
    </location>
    <ligand>
        <name>GMP</name>
        <dbReference type="ChEBI" id="CHEBI:58115"/>
    </ligand>
</feature>
<feature type="binding site" evidence="1">
    <location>
        <position position="407"/>
    </location>
    <ligand>
        <name>GMP</name>
        <dbReference type="ChEBI" id="CHEBI:58115"/>
    </ligand>
</feature>
<proteinExistence type="evidence at protein level"/>
<comment type="function">
    <text evidence="2 3">GTP-dependent RNA ligase that is involved in RNA repair. Joins RNA with 2',3'-cyclic-phosphate or 3'-phosphate ends to RNA with 5'-hydroxy ends (By similarity). GTP-dependent RNA ligase that is involved in tRNA repair (PubMed:35858322). Repairs broken tRNA(Asp) and tRNA(Arg) that have been cleaved by colicin E5 or colicin D, respectively (PubMed:35858322). Does not repair damaged 16S rRNA in 30S ribosomal subunits (PubMed:35858322).</text>
</comment>
<comment type="catalytic activity">
    <reaction evidence="6">
        <text>a 3'-end 3'-phospho-ribonucleotide-RNA + a 5'-end dephospho-ribonucleoside-RNA + GTP = a ribonucleotidyl-ribonucleotide-RNA + GMP + diphosphate</text>
        <dbReference type="Rhea" id="RHEA:68076"/>
        <dbReference type="Rhea" id="RHEA-COMP:10463"/>
        <dbReference type="Rhea" id="RHEA-COMP:13936"/>
        <dbReference type="Rhea" id="RHEA-COMP:17355"/>
        <dbReference type="ChEBI" id="CHEBI:33019"/>
        <dbReference type="ChEBI" id="CHEBI:37565"/>
        <dbReference type="ChEBI" id="CHEBI:58115"/>
        <dbReference type="ChEBI" id="CHEBI:83062"/>
        <dbReference type="ChEBI" id="CHEBI:138284"/>
        <dbReference type="ChEBI" id="CHEBI:173118"/>
        <dbReference type="EC" id="6.5.1.8"/>
    </reaction>
</comment>
<comment type="catalytic activity">
    <reaction evidence="6">
        <text>a 3'-end 2',3'-cyclophospho-ribonucleotide-RNA + a 5'-end dephospho-ribonucleoside-RNA + GTP + H2O = a ribonucleotidyl-ribonucleotide-RNA + GMP + diphosphate + H(+)</text>
        <dbReference type="Rhea" id="RHEA:68080"/>
        <dbReference type="Rhea" id="RHEA-COMP:10464"/>
        <dbReference type="Rhea" id="RHEA-COMP:13936"/>
        <dbReference type="Rhea" id="RHEA-COMP:17355"/>
        <dbReference type="ChEBI" id="CHEBI:15377"/>
        <dbReference type="ChEBI" id="CHEBI:15378"/>
        <dbReference type="ChEBI" id="CHEBI:33019"/>
        <dbReference type="ChEBI" id="CHEBI:37565"/>
        <dbReference type="ChEBI" id="CHEBI:58115"/>
        <dbReference type="ChEBI" id="CHEBI:83064"/>
        <dbReference type="ChEBI" id="CHEBI:138284"/>
        <dbReference type="ChEBI" id="CHEBI:173118"/>
        <dbReference type="EC" id="6.5.1.8"/>
    </reaction>
</comment>
<comment type="cofactor">
    <cofactor evidence="2">
        <name>Mn(2+)</name>
        <dbReference type="ChEBI" id="CHEBI:29035"/>
    </cofactor>
    <text evidence="1">Binds 2 manganese ions per subunit.</text>
</comment>
<comment type="subunit">
    <text evidence="2">Monomer.</text>
</comment>
<comment type="miscellaneous">
    <text evidence="2">Ligation proceeds through 3 nucleotidyl transfer steps, with 2',3'-cyclic phosphate termini being hydrolyzed to 3'-P termini in a step that precedes 3'-P activation with GMP. In the first nucleotidyl transfer step, RtcB1 reacts with GTP to form a covalent RtcB-histidine-GMP intermediate with release of PPi; in the second step, the GMP moiety is transferred to the RNA 3'-P; in the third step, the 5'-OH from the opposite RNA strand attacks the activated 3'-P to form a 3',5'-phosphodiester bond and release GMP.</text>
</comment>
<comment type="similarity">
    <text evidence="5">Belongs to the RtcB family.</text>
</comment>
<reference key="1">
    <citation type="journal article" date="2014" name="Genome Announc.">
        <title>Complete Genome Assembly of Escherichia coli ATCC 25922, a Serotype O6 Reference Strain.</title>
        <authorList>
            <person name="Minogue T.D."/>
            <person name="Daligault H.A."/>
            <person name="Davenport K.W."/>
            <person name="Bishop-Lilly K.A."/>
            <person name="Broomall S.M."/>
            <person name="Bruce D.C."/>
            <person name="Chain P.S."/>
            <person name="Chertkov O."/>
            <person name="Coyne S.R."/>
            <person name="Freitas T."/>
            <person name="Frey K.G."/>
            <person name="Gibbons H.S."/>
            <person name="Jaissle J."/>
            <person name="Redden C.L."/>
            <person name="Rosenzweig C.N."/>
            <person name="Xu Y."/>
            <person name="Johnson S.L."/>
        </authorList>
    </citation>
    <scope>NUCLEOTIDE SEQUENCE [LARGE SCALE GENOMIC DNA]</scope>
    <source>
        <strain>ATCC 25922 / DSM 1103 / LMG 8223 / NCIMB 12210 / NCTC 12241 / WDCM 00013 / Seattle 1946</strain>
    </source>
</reference>
<reference key="2">
    <citation type="journal article" date="2022" name="Proc. Natl. Acad. Sci. U.S.A.">
        <title>Sequential rescue and repair of stalled and damaged ribosome by bacterial PrfH and RtcB.</title>
        <authorList>
            <person name="Tian Y."/>
            <person name="Zeng F."/>
            <person name="Raybarman A."/>
            <person name="Fatma S."/>
            <person name="Carruthers A."/>
            <person name="Li Q."/>
            <person name="Huang R.H."/>
        </authorList>
    </citation>
    <scope>FUNCTION</scope>
    <scope>CATALYTIC ACTIVITY</scope>
    <source>
        <strain>ATCC 25922 / DSM 1103 / LMG 8223 / NCIMB 12210 / NCTC 12241 / WDCM 00013 / Seattle 1946</strain>
    </source>
</reference>
<gene>
    <name evidence="4" type="primary">rtcB1</name>
    <name evidence="7" type="ORF">DR76_1083</name>
</gene>
<keyword id="KW-0342">GTP-binding</keyword>
<keyword id="KW-0436">Ligase</keyword>
<keyword id="KW-0464">Manganese</keyword>
<keyword id="KW-0479">Metal-binding</keyword>
<keyword id="KW-0547">Nucleotide-binding</keyword>
<keyword id="KW-0692">RNA repair</keyword>
<dbReference type="EC" id="6.5.1.8" evidence="3"/>
<dbReference type="EMBL" id="CP009072">
    <property type="protein sequence ID" value="AIL15363.1"/>
    <property type="molecule type" value="Genomic_DNA"/>
</dbReference>
<dbReference type="SMR" id="P0DX92"/>
<dbReference type="GO" id="GO:0003909">
    <property type="term" value="F:DNA ligase activity"/>
    <property type="evidence" value="ECO:0007669"/>
    <property type="project" value="TreeGrafter"/>
</dbReference>
<dbReference type="GO" id="GO:0005525">
    <property type="term" value="F:GTP binding"/>
    <property type="evidence" value="ECO:0007669"/>
    <property type="project" value="UniProtKB-KW"/>
</dbReference>
<dbReference type="GO" id="GO:0030145">
    <property type="term" value="F:manganese ion binding"/>
    <property type="evidence" value="ECO:0007669"/>
    <property type="project" value="TreeGrafter"/>
</dbReference>
<dbReference type="GO" id="GO:0006281">
    <property type="term" value="P:DNA repair"/>
    <property type="evidence" value="ECO:0007669"/>
    <property type="project" value="TreeGrafter"/>
</dbReference>
<dbReference type="GO" id="GO:0006396">
    <property type="term" value="P:RNA processing"/>
    <property type="evidence" value="ECO:0007669"/>
    <property type="project" value="InterPro"/>
</dbReference>
<dbReference type="GO" id="GO:0042245">
    <property type="term" value="P:RNA repair"/>
    <property type="evidence" value="ECO:0007669"/>
    <property type="project" value="UniProtKB-KW"/>
</dbReference>
<dbReference type="FunFam" id="3.90.1860.10:FF:000002">
    <property type="entry name" value="RNA-splicing ligase RtcB"/>
    <property type="match status" value="1"/>
</dbReference>
<dbReference type="Gene3D" id="3.90.1860.10">
    <property type="entry name" value="tRNA-splicing ligase RtcB"/>
    <property type="match status" value="1"/>
</dbReference>
<dbReference type="InterPro" id="IPR001233">
    <property type="entry name" value="RtcB"/>
</dbReference>
<dbReference type="InterPro" id="IPR052915">
    <property type="entry name" value="RtcB-like"/>
</dbReference>
<dbReference type="InterPro" id="IPR036025">
    <property type="entry name" value="RtcB-like_sf"/>
</dbReference>
<dbReference type="PANTHER" id="PTHR43749">
    <property type="entry name" value="RNA-SPLICING LIGASE RTCB"/>
    <property type="match status" value="1"/>
</dbReference>
<dbReference type="PANTHER" id="PTHR43749:SF2">
    <property type="entry name" value="RNA-SPLICING LIGASE RTCB"/>
    <property type="match status" value="1"/>
</dbReference>
<dbReference type="Pfam" id="PF01139">
    <property type="entry name" value="RtcB"/>
    <property type="match status" value="1"/>
</dbReference>
<dbReference type="SUPFAM" id="SSF103365">
    <property type="entry name" value="Hypothetical protein PH1602"/>
    <property type="match status" value="1"/>
</dbReference>
<dbReference type="PROSITE" id="PS01288">
    <property type="entry name" value="UPF0027"/>
    <property type="match status" value="1"/>
</dbReference>
<name>RTCB1_ECOS1</name>